<proteinExistence type="inferred from homology"/>
<gene>
    <name evidence="1" type="primary">rpsD</name>
    <name type="ordered locus">XfasM23_0456</name>
</gene>
<reference key="1">
    <citation type="journal article" date="2010" name="J. Bacteriol.">
        <title>Whole genome sequences of two Xylella fastidiosa strains (M12 and M23) causing almond leaf scorch disease in California.</title>
        <authorList>
            <person name="Chen J."/>
            <person name="Xie G."/>
            <person name="Han S."/>
            <person name="Chertkov O."/>
            <person name="Sims D."/>
            <person name="Civerolo E.L."/>
        </authorList>
    </citation>
    <scope>NUCLEOTIDE SEQUENCE [LARGE SCALE GENOMIC DNA]</scope>
    <source>
        <strain>M23</strain>
    </source>
</reference>
<comment type="function">
    <text evidence="1">One of the primary rRNA binding proteins, it binds directly to 16S rRNA where it nucleates assembly of the body of the 30S subunit.</text>
</comment>
<comment type="function">
    <text evidence="1">With S5 and S12 plays an important role in translational accuracy.</text>
</comment>
<comment type="subunit">
    <text evidence="1">Part of the 30S ribosomal subunit. Contacts protein S5. The interaction surface between S4 and S5 is involved in control of translational fidelity.</text>
</comment>
<comment type="similarity">
    <text evidence="1">Belongs to the universal ribosomal protein uS4 family.</text>
</comment>
<sequence length="208" mass="23471">MARYIGPSCKLARREGADLSLKSPSRALDSKCKLEQRPGQHGAVRKSKLSDYASQLREKQKVKRIYGVLERQFRNYYKNASTKKGNTGENLLQLLETRLDNVIYRMGFAVTRPAARQLVSHRSVLVNGKMVNLPSYHVKPGDVVALSQRAQKYLCVQESLTIKDQHGSAFSWIEVDSEKFSGVFKALPDRADLPSDINEALIVELYSK</sequence>
<evidence type="ECO:0000255" key="1">
    <source>
        <dbReference type="HAMAP-Rule" id="MF_01306"/>
    </source>
</evidence>
<evidence type="ECO:0000305" key="2"/>
<protein>
    <recommendedName>
        <fullName evidence="1">Small ribosomal subunit protein uS4</fullName>
    </recommendedName>
    <alternativeName>
        <fullName evidence="2">30S ribosomal protein S4</fullName>
    </alternativeName>
</protein>
<organism>
    <name type="scientific">Xylella fastidiosa (strain M23)</name>
    <dbReference type="NCBI Taxonomy" id="405441"/>
    <lineage>
        <taxon>Bacteria</taxon>
        <taxon>Pseudomonadati</taxon>
        <taxon>Pseudomonadota</taxon>
        <taxon>Gammaproteobacteria</taxon>
        <taxon>Lysobacterales</taxon>
        <taxon>Lysobacteraceae</taxon>
        <taxon>Xylella</taxon>
    </lineage>
</organism>
<feature type="chain" id="PRO_1000140820" description="Small ribosomal subunit protein uS4">
    <location>
        <begin position="1"/>
        <end position="208"/>
    </location>
</feature>
<feature type="domain" description="S4 RNA-binding" evidence="1">
    <location>
        <begin position="97"/>
        <end position="158"/>
    </location>
</feature>
<dbReference type="EMBL" id="CP001011">
    <property type="protein sequence ID" value="ACB91903.1"/>
    <property type="molecule type" value="Genomic_DNA"/>
</dbReference>
<dbReference type="RefSeq" id="WP_004090136.1">
    <property type="nucleotide sequence ID" value="NC_010577.1"/>
</dbReference>
<dbReference type="SMR" id="B2I8J2"/>
<dbReference type="GeneID" id="93904162"/>
<dbReference type="KEGG" id="xfn:XfasM23_0456"/>
<dbReference type="HOGENOM" id="CLU_092403_0_2_6"/>
<dbReference type="Proteomes" id="UP000001698">
    <property type="component" value="Chromosome"/>
</dbReference>
<dbReference type="GO" id="GO:0015935">
    <property type="term" value="C:small ribosomal subunit"/>
    <property type="evidence" value="ECO:0007669"/>
    <property type="project" value="InterPro"/>
</dbReference>
<dbReference type="GO" id="GO:0019843">
    <property type="term" value="F:rRNA binding"/>
    <property type="evidence" value="ECO:0007669"/>
    <property type="project" value="UniProtKB-UniRule"/>
</dbReference>
<dbReference type="GO" id="GO:0003735">
    <property type="term" value="F:structural constituent of ribosome"/>
    <property type="evidence" value="ECO:0007669"/>
    <property type="project" value="InterPro"/>
</dbReference>
<dbReference type="GO" id="GO:0042274">
    <property type="term" value="P:ribosomal small subunit biogenesis"/>
    <property type="evidence" value="ECO:0007669"/>
    <property type="project" value="TreeGrafter"/>
</dbReference>
<dbReference type="GO" id="GO:0006412">
    <property type="term" value="P:translation"/>
    <property type="evidence" value="ECO:0007669"/>
    <property type="project" value="UniProtKB-UniRule"/>
</dbReference>
<dbReference type="CDD" id="cd00165">
    <property type="entry name" value="S4"/>
    <property type="match status" value="1"/>
</dbReference>
<dbReference type="FunFam" id="1.10.1050.10:FF:000001">
    <property type="entry name" value="30S ribosomal protein S4"/>
    <property type="match status" value="1"/>
</dbReference>
<dbReference type="FunFam" id="3.10.290.10:FF:000001">
    <property type="entry name" value="30S ribosomal protein S4"/>
    <property type="match status" value="1"/>
</dbReference>
<dbReference type="Gene3D" id="1.10.1050.10">
    <property type="entry name" value="Ribosomal Protein S4 Delta 41, Chain A, domain 1"/>
    <property type="match status" value="1"/>
</dbReference>
<dbReference type="Gene3D" id="3.10.290.10">
    <property type="entry name" value="RNA-binding S4 domain"/>
    <property type="match status" value="1"/>
</dbReference>
<dbReference type="HAMAP" id="MF_01306_B">
    <property type="entry name" value="Ribosomal_uS4_B"/>
    <property type="match status" value="1"/>
</dbReference>
<dbReference type="InterPro" id="IPR022801">
    <property type="entry name" value="Ribosomal_uS4"/>
</dbReference>
<dbReference type="InterPro" id="IPR005709">
    <property type="entry name" value="Ribosomal_uS4_bac-type"/>
</dbReference>
<dbReference type="InterPro" id="IPR018079">
    <property type="entry name" value="Ribosomal_uS4_CS"/>
</dbReference>
<dbReference type="InterPro" id="IPR001912">
    <property type="entry name" value="Ribosomal_uS4_N"/>
</dbReference>
<dbReference type="InterPro" id="IPR002942">
    <property type="entry name" value="S4_RNA-bd"/>
</dbReference>
<dbReference type="InterPro" id="IPR036986">
    <property type="entry name" value="S4_RNA-bd_sf"/>
</dbReference>
<dbReference type="NCBIfam" id="NF003717">
    <property type="entry name" value="PRK05327.1"/>
    <property type="match status" value="1"/>
</dbReference>
<dbReference type="NCBIfam" id="TIGR01017">
    <property type="entry name" value="rpsD_bact"/>
    <property type="match status" value="1"/>
</dbReference>
<dbReference type="PANTHER" id="PTHR11831">
    <property type="entry name" value="30S 40S RIBOSOMAL PROTEIN"/>
    <property type="match status" value="1"/>
</dbReference>
<dbReference type="PANTHER" id="PTHR11831:SF4">
    <property type="entry name" value="SMALL RIBOSOMAL SUBUNIT PROTEIN US4M"/>
    <property type="match status" value="1"/>
</dbReference>
<dbReference type="Pfam" id="PF00163">
    <property type="entry name" value="Ribosomal_S4"/>
    <property type="match status" value="1"/>
</dbReference>
<dbReference type="Pfam" id="PF01479">
    <property type="entry name" value="S4"/>
    <property type="match status" value="1"/>
</dbReference>
<dbReference type="SMART" id="SM01390">
    <property type="entry name" value="Ribosomal_S4"/>
    <property type="match status" value="1"/>
</dbReference>
<dbReference type="SMART" id="SM00363">
    <property type="entry name" value="S4"/>
    <property type="match status" value="1"/>
</dbReference>
<dbReference type="SUPFAM" id="SSF55174">
    <property type="entry name" value="Alpha-L RNA-binding motif"/>
    <property type="match status" value="1"/>
</dbReference>
<dbReference type="PROSITE" id="PS00632">
    <property type="entry name" value="RIBOSOMAL_S4"/>
    <property type="match status" value="1"/>
</dbReference>
<dbReference type="PROSITE" id="PS50889">
    <property type="entry name" value="S4"/>
    <property type="match status" value="1"/>
</dbReference>
<name>RS4_XYLF2</name>
<accession>B2I8J2</accession>
<keyword id="KW-0687">Ribonucleoprotein</keyword>
<keyword id="KW-0689">Ribosomal protein</keyword>
<keyword id="KW-0694">RNA-binding</keyword>
<keyword id="KW-0699">rRNA-binding</keyword>